<accession>Q5FC78</accession>
<comment type="subcellular location">
    <subcellularLocation>
        <location evidence="2">Cell membrane</location>
        <topology evidence="2">Multi-pass membrane protein</topology>
    </subcellularLocation>
</comment>
<comment type="similarity">
    <text evidence="2">Belongs to the G-protein coupled receptor 1 family.</text>
</comment>
<proteinExistence type="inferred from homology"/>
<gene>
    <name type="ORF">F27E5.8</name>
</gene>
<organism>
    <name type="scientific">Caenorhabditis elegans</name>
    <dbReference type="NCBI Taxonomy" id="6239"/>
    <lineage>
        <taxon>Eukaryota</taxon>
        <taxon>Metazoa</taxon>
        <taxon>Ecdysozoa</taxon>
        <taxon>Nematoda</taxon>
        <taxon>Chromadorea</taxon>
        <taxon>Rhabditida</taxon>
        <taxon>Rhabditina</taxon>
        <taxon>Rhabditomorpha</taxon>
        <taxon>Rhabditoidea</taxon>
        <taxon>Rhabditidae</taxon>
        <taxon>Peloderinae</taxon>
        <taxon>Caenorhabditis</taxon>
    </lineage>
</organism>
<name>YQV8_CAEEL</name>
<dbReference type="EMBL" id="Z48582">
    <property type="protein sequence ID" value="CAI46606.2"/>
    <property type="molecule type" value="Genomic_DNA"/>
</dbReference>
<dbReference type="RefSeq" id="NP_001022122.2">
    <property type="nucleotide sequence ID" value="NM_001026951.3"/>
</dbReference>
<dbReference type="SMR" id="Q5FC78"/>
<dbReference type="PaxDb" id="6239-F27E5.8"/>
<dbReference type="EnsemblMetazoa" id="F27E5.8.1">
    <property type="protein sequence ID" value="F27E5.8.1"/>
    <property type="gene ID" value="WBGene00044027"/>
</dbReference>
<dbReference type="GeneID" id="3565659"/>
<dbReference type="KEGG" id="cel:CELE_F27E5.8"/>
<dbReference type="UCSC" id="F27E5.8">
    <property type="organism name" value="c. elegans"/>
</dbReference>
<dbReference type="AGR" id="WB:WBGene00044027"/>
<dbReference type="CTD" id="3565659"/>
<dbReference type="WormBase" id="F27E5.8">
    <property type="protein sequence ID" value="CE45560"/>
    <property type="gene ID" value="WBGene00044027"/>
</dbReference>
<dbReference type="eggNOG" id="ENOG502TGP7">
    <property type="taxonomic scope" value="Eukaryota"/>
</dbReference>
<dbReference type="HOGENOM" id="CLU_050579_0_0_1"/>
<dbReference type="InParanoid" id="Q5FC78"/>
<dbReference type="OMA" id="LICNCCI"/>
<dbReference type="OrthoDB" id="5803682at2759"/>
<dbReference type="PRO" id="PR:Q5FC78"/>
<dbReference type="Proteomes" id="UP000001940">
    <property type="component" value="Chromosome II"/>
</dbReference>
<dbReference type="GO" id="GO:0005886">
    <property type="term" value="C:plasma membrane"/>
    <property type="evidence" value="ECO:0007669"/>
    <property type="project" value="UniProtKB-SubCell"/>
</dbReference>
<dbReference type="GO" id="GO:0004930">
    <property type="term" value="F:G protein-coupled receptor activity"/>
    <property type="evidence" value="ECO:0007669"/>
    <property type="project" value="UniProtKB-KW"/>
</dbReference>
<dbReference type="Gene3D" id="1.20.1070.10">
    <property type="entry name" value="Rhodopsin 7-helix transmembrane proteins"/>
    <property type="match status" value="1"/>
</dbReference>
<dbReference type="InterPro" id="IPR019408">
    <property type="entry name" value="7TM_GPCR_serpentine_rcpt_Srab"/>
</dbReference>
<dbReference type="InterPro" id="IPR052860">
    <property type="entry name" value="NRL-GPCR1"/>
</dbReference>
<dbReference type="PANTHER" id="PTHR47521:SF8">
    <property type="entry name" value="G-PROTEIN COUPLED RECEPTOR F27E5.5-RELATED"/>
    <property type="match status" value="1"/>
</dbReference>
<dbReference type="PANTHER" id="PTHR47521">
    <property type="entry name" value="SERPENTINE RECEPTOR, CLASS E (EPSILON)-RELATED"/>
    <property type="match status" value="1"/>
</dbReference>
<dbReference type="Pfam" id="PF10292">
    <property type="entry name" value="7TM_GPCR_Srab"/>
    <property type="match status" value="1"/>
</dbReference>
<protein>
    <recommendedName>
        <fullName>Probable G-protein coupled receptor F27E5.8</fullName>
    </recommendedName>
</protein>
<feature type="chain" id="PRO_0000065318" description="Probable G-protein coupled receptor F27E5.8">
    <location>
        <begin position="1"/>
        <end position="377"/>
    </location>
</feature>
<feature type="topological domain" description="Extracellular" evidence="1">
    <location>
        <begin position="1"/>
        <end position="34"/>
    </location>
</feature>
<feature type="transmembrane region" description="Helical; Name=1" evidence="1">
    <location>
        <begin position="35"/>
        <end position="55"/>
    </location>
</feature>
<feature type="topological domain" description="Cytoplasmic" evidence="1">
    <location>
        <begin position="56"/>
        <end position="71"/>
    </location>
</feature>
<feature type="transmembrane region" description="Helical; Name=2" evidence="1">
    <location>
        <begin position="72"/>
        <end position="92"/>
    </location>
</feature>
<feature type="topological domain" description="Extracellular" evidence="1">
    <location>
        <begin position="93"/>
        <end position="105"/>
    </location>
</feature>
<feature type="transmembrane region" description="Helical; Name=3" evidence="1">
    <location>
        <begin position="106"/>
        <end position="126"/>
    </location>
</feature>
<feature type="topological domain" description="Cytoplasmic" evidence="1">
    <location>
        <begin position="127"/>
        <end position="144"/>
    </location>
</feature>
<feature type="transmembrane region" description="Helical; Name=4" evidence="1">
    <location>
        <begin position="145"/>
        <end position="165"/>
    </location>
</feature>
<feature type="topological domain" description="Extracellular" evidence="1">
    <location>
        <begin position="166"/>
        <end position="195"/>
    </location>
</feature>
<feature type="transmembrane region" description="Helical; Name=5" evidence="1">
    <location>
        <begin position="196"/>
        <end position="216"/>
    </location>
</feature>
<feature type="topological domain" description="Cytoplasmic" evidence="1">
    <location>
        <begin position="217"/>
        <end position="251"/>
    </location>
</feature>
<feature type="transmembrane region" description="Helical; Name=6" evidence="1">
    <location>
        <begin position="252"/>
        <end position="272"/>
    </location>
</feature>
<feature type="topological domain" description="Extracellular" evidence="1">
    <location>
        <begin position="273"/>
        <end position="303"/>
    </location>
</feature>
<feature type="transmembrane region" description="Helical; Name=7" evidence="1">
    <location>
        <begin position="304"/>
        <end position="324"/>
    </location>
</feature>
<feature type="topological domain" description="Cytoplasmic" evidence="1">
    <location>
        <begin position="325"/>
        <end position="377"/>
    </location>
</feature>
<feature type="glycosylation site" description="N-linked (GlcNAc...) asparagine" evidence="1">
    <location>
        <position position="18"/>
    </location>
</feature>
<keyword id="KW-1003">Cell membrane</keyword>
<keyword id="KW-0297">G-protein coupled receptor</keyword>
<keyword id="KW-0325">Glycoprotein</keyword>
<keyword id="KW-0472">Membrane</keyword>
<keyword id="KW-0675">Receptor</keyword>
<keyword id="KW-1185">Reference proteome</keyword>
<keyword id="KW-0807">Transducer</keyword>
<keyword id="KW-0812">Transmembrane</keyword>
<keyword id="KW-1133">Transmembrane helix</keyword>
<reference key="1">
    <citation type="journal article" date="1998" name="Science">
        <title>Genome sequence of the nematode C. elegans: a platform for investigating biology.</title>
        <authorList>
            <consortium name="The C. elegans sequencing consortium"/>
        </authorList>
    </citation>
    <scope>NUCLEOTIDE SEQUENCE [LARGE SCALE GENOMIC DNA]</scope>
    <source>
        <strain>Bristol N2</strain>
    </source>
</reference>
<sequence length="377" mass="43248">MSEQDSSSPKYMRFLLGNFTSAEMVTDGNFLIYCIEMGLLVIGVLENIFMIGAVFSTSCLHLNLRILICNCCLGFILMAVGRAMIAVPLCIAHLRDVDISSHAWCFIANAVHHSSADSVCLSFVFIMLERTAGTIWSKDYEKTKIHIFPCIFAFLQWFIPMFMILGNFLDRANRMEHFLLYPHLPCQIEYLTPTMFMITIFIIVIGFIASVGGITIVYNKNIKKYNTRDIWFNTVNLSERYQITENIRSTHLLFPLLALMLIFSTLSVSVLIYGGYWVSVMTKEPARFEEVVKWFGRGGEAAQLFDIITAIYTISFPICAFICHPNLFRFLRKFIGWNSYAVRPSNLNEIGGFEMSTAPIRTQTEFHFQELSRQWNT</sequence>
<evidence type="ECO:0000255" key="1"/>
<evidence type="ECO:0000305" key="2"/>